<protein>
    <recommendedName>
        <fullName evidence="2">Large ribosomal subunit protein bL27c</fullName>
    </recommendedName>
    <alternativeName>
        <fullName>50S ribosomal protein L27, chloroplastic</fullName>
    </alternativeName>
</protein>
<evidence type="ECO:0000256" key="1">
    <source>
        <dbReference type="SAM" id="MobiDB-lite"/>
    </source>
</evidence>
<evidence type="ECO:0000305" key="2"/>
<reference key="1">
    <citation type="journal article" date="1994" name="Plant Mol. Biol.">
        <title>The gene for ribosomal protein L27 is located on the plastid rather than the nuclear genome of the chlorophyll c-containing alga Pleurochrysis carterae.</title>
        <authorList>
            <person name="Fujiwara S."/>
            <person name="Kawachi M."/>
            <person name="Inouye I."/>
            <person name="Someya J."/>
        </authorList>
    </citation>
    <scope>NUCLEOTIDE SEQUENCE [GENOMIC DNA]</scope>
</reference>
<accession>P41545</accession>
<sequence length="82" mass="8963">MAHKKGAGSTKNGRDSNSKRLGVKVYGDQPVKKGGIIIRQRGLTFKPGINVAVGRDYTLFALQEGDVKFETIADRKFVSVIK</sequence>
<geneLocation type="chloroplast"/>
<feature type="chain" id="PRO_0000181224" description="Large ribosomal subunit protein bL27c">
    <location>
        <begin position="1"/>
        <end position="82"/>
    </location>
</feature>
<feature type="region of interest" description="Disordered" evidence="1">
    <location>
        <begin position="1"/>
        <end position="22"/>
    </location>
</feature>
<gene>
    <name type="primary">rpl27</name>
</gene>
<proteinExistence type="inferred from homology"/>
<keyword id="KW-0150">Chloroplast</keyword>
<keyword id="KW-0934">Plastid</keyword>
<keyword id="KW-0687">Ribonucleoprotein</keyword>
<keyword id="KW-0689">Ribosomal protein</keyword>
<name>RK27_CHRCT</name>
<comment type="subcellular location">
    <subcellularLocation>
        <location>Plastid</location>
        <location>Chloroplast</location>
    </subcellularLocation>
</comment>
<comment type="similarity">
    <text evidence="2">Belongs to the bacterial ribosomal protein bL27 family.</text>
</comment>
<dbReference type="EMBL" id="D26100">
    <property type="protein sequence ID" value="BAA05095.1"/>
    <property type="molecule type" value="Genomic_DNA"/>
</dbReference>
<dbReference type="PIR" id="S42638">
    <property type="entry name" value="S42638"/>
</dbReference>
<dbReference type="SMR" id="P41545"/>
<dbReference type="GO" id="GO:0009507">
    <property type="term" value="C:chloroplast"/>
    <property type="evidence" value="ECO:0007669"/>
    <property type="project" value="UniProtKB-SubCell"/>
</dbReference>
<dbReference type="GO" id="GO:1990904">
    <property type="term" value="C:ribonucleoprotein complex"/>
    <property type="evidence" value="ECO:0007669"/>
    <property type="project" value="UniProtKB-KW"/>
</dbReference>
<dbReference type="GO" id="GO:0005840">
    <property type="term" value="C:ribosome"/>
    <property type="evidence" value="ECO:0007669"/>
    <property type="project" value="UniProtKB-KW"/>
</dbReference>
<dbReference type="GO" id="GO:0003735">
    <property type="term" value="F:structural constituent of ribosome"/>
    <property type="evidence" value="ECO:0007669"/>
    <property type="project" value="InterPro"/>
</dbReference>
<dbReference type="GO" id="GO:0006412">
    <property type="term" value="P:translation"/>
    <property type="evidence" value="ECO:0007669"/>
    <property type="project" value="UniProtKB-UniRule"/>
</dbReference>
<dbReference type="FunFam" id="2.40.50.100:FF:000060">
    <property type="entry name" value="Apicoplast ribosomal protein L27"/>
    <property type="match status" value="1"/>
</dbReference>
<dbReference type="Gene3D" id="2.40.50.100">
    <property type="match status" value="1"/>
</dbReference>
<dbReference type="HAMAP" id="MF_00539">
    <property type="entry name" value="Ribosomal_bL27"/>
    <property type="match status" value="1"/>
</dbReference>
<dbReference type="InterPro" id="IPR001684">
    <property type="entry name" value="Ribosomal_bL27"/>
</dbReference>
<dbReference type="InterPro" id="IPR018261">
    <property type="entry name" value="Ribosomal_bL27_CS"/>
</dbReference>
<dbReference type="NCBIfam" id="TIGR00062">
    <property type="entry name" value="L27"/>
    <property type="match status" value="1"/>
</dbReference>
<dbReference type="PANTHER" id="PTHR15893:SF0">
    <property type="entry name" value="LARGE RIBOSOMAL SUBUNIT PROTEIN BL27M"/>
    <property type="match status" value="1"/>
</dbReference>
<dbReference type="PANTHER" id="PTHR15893">
    <property type="entry name" value="RIBOSOMAL PROTEIN L27"/>
    <property type="match status" value="1"/>
</dbReference>
<dbReference type="Pfam" id="PF01016">
    <property type="entry name" value="Ribosomal_L27"/>
    <property type="match status" value="1"/>
</dbReference>
<dbReference type="PRINTS" id="PR00063">
    <property type="entry name" value="RIBOSOMALL27"/>
</dbReference>
<dbReference type="SUPFAM" id="SSF110324">
    <property type="entry name" value="Ribosomal L27 protein-like"/>
    <property type="match status" value="1"/>
</dbReference>
<dbReference type="PROSITE" id="PS00831">
    <property type="entry name" value="RIBOSOMAL_L27"/>
    <property type="match status" value="1"/>
</dbReference>
<organism>
    <name type="scientific">Chrysotila carterae</name>
    <name type="common">Marine alga</name>
    <name type="synonym">Syracosphaera carterae</name>
    <dbReference type="NCBI Taxonomy" id="13221"/>
    <lineage>
        <taxon>Eukaryota</taxon>
        <taxon>Haptista</taxon>
        <taxon>Haptophyta</taxon>
        <taxon>Prymnesiophyceae</taxon>
        <taxon>Isochrysidales</taxon>
        <taxon>Isochrysidaceae</taxon>
        <taxon>Chrysotila</taxon>
    </lineage>
</organism>